<reference key="1">
    <citation type="submission" date="2007-06" db="EMBL/GenBank/DDBJ databases">
        <title>Complete sequence of Sinorhizobium medicae WSM419 chromosome.</title>
        <authorList>
            <consortium name="US DOE Joint Genome Institute"/>
            <person name="Copeland A."/>
            <person name="Lucas S."/>
            <person name="Lapidus A."/>
            <person name="Barry K."/>
            <person name="Glavina del Rio T."/>
            <person name="Dalin E."/>
            <person name="Tice H."/>
            <person name="Pitluck S."/>
            <person name="Chain P."/>
            <person name="Malfatti S."/>
            <person name="Shin M."/>
            <person name="Vergez L."/>
            <person name="Schmutz J."/>
            <person name="Larimer F."/>
            <person name="Land M."/>
            <person name="Hauser L."/>
            <person name="Kyrpides N."/>
            <person name="Mikhailova N."/>
            <person name="Reeve W.G."/>
            <person name="Richardson P."/>
        </authorList>
    </citation>
    <scope>NUCLEOTIDE SEQUENCE [LARGE SCALE GENOMIC DNA]</scope>
    <source>
        <strain>WSM419</strain>
    </source>
</reference>
<evidence type="ECO:0000255" key="1">
    <source>
        <dbReference type="HAMAP-Rule" id="MF_00129"/>
    </source>
</evidence>
<gene>
    <name evidence="1" type="primary">mnmG</name>
    <name evidence="1" type="synonym">gidA</name>
    <name type="ordered locus">Smed_3204</name>
</gene>
<proteinExistence type="inferred from homology"/>
<accession>A6UEE8</accession>
<keyword id="KW-0963">Cytoplasm</keyword>
<keyword id="KW-0274">FAD</keyword>
<keyword id="KW-0285">Flavoprotein</keyword>
<keyword id="KW-0520">NAD</keyword>
<keyword id="KW-0819">tRNA processing</keyword>
<protein>
    <recommendedName>
        <fullName evidence="1">tRNA uridine 5-carboxymethylaminomethyl modification enzyme MnmG</fullName>
    </recommendedName>
    <alternativeName>
        <fullName evidence="1">Glucose-inhibited division protein A</fullName>
    </alternativeName>
</protein>
<organism>
    <name type="scientific">Sinorhizobium medicae (strain WSM419)</name>
    <name type="common">Ensifer medicae</name>
    <dbReference type="NCBI Taxonomy" id="366394"/>
    <lineage>
        <taxon>Bacteria</taxon>
        <taxon>Pseudomonadati</taxon>
        <taxon>Pseudomonadota</taxon>
        <taxon>Alphaproteobacteria</taxon>
        <taxon>Hyphomicrobiales</taxon>
        <taxon>Rhizobiaceae</taxon>
        <taxon>Sinorhizobium/Ensifer group</taxon>
        <taxon>Sinorhizobium</taxon>
    </lineage>
</organism>
<dbReference type="EMBL" id="CP000738">
    <property type="protein sequence ID" value="ABR62028.1"/>
    <property type="molecule type" value="Genomic_DNA"/>
</dbReference>
<dbReference type="RefSeq" id="WP_012067409.1">
    <property type="nucleotide sequence ID" value="NC_009636.1"/>
</dbReference>
<dbReference type="RefSeq" id="YP_001328863.1">
    <property type="nucleotide sequence ID" value="NC_009636.1"/>
</dbReference>
<dbReference type="SMR" id="A6UEE8"/>
<dbReference type="STRING" id="366394.Smed_3204"/>
<dbReference type="GeneID" id="61610786"/>
<dbReference type="KEGG" id="smd:Smed_3204"/>
<dbReference type="PATRIC" id="fig|366394.8.peg.6442"/>
<dbReference type="eggNOG" id="COG0445">
    <property type="taxonomic scope" value="Bacteria"/>
</dbReference>
<dbReference type="HOGENOM" id="CLU_007831_2_2_5"/>
<dbReference type="OrthoDB" id="9815560at2"/>
<dbReference type="Proteomes" id="UP000001108">
    <property type="component" value="Chromosome"/>
</dbReference>
<dbReference type="GO" id="GO:0005829">
    <property type="term" value="C:cytosol"/>
    <property type="evidence" value="ECO:0007669"/>
    <property type="project" value="TreeGrafter"/>
</dbReference>
<dbReference type="GO" id="GO:0050660">
    <property type="term" value="F:flavin adenine dinucleotide binding"/>
    <property type="evidence" value="ECO:0007669"/>
    <property type="project" value="UniProtKB-UniRule"/>
</dbReference>
<dbReference type="GO" id="GO:0030488">
    <property type="term" value="P:tRNA methylation"/>
    <property type="evidence" value="ECO:0007669"/>
    <property type="project" value="TreeGrafter"/>
</dbReference>
<dbReference type="GO" id="GO:0002098">
    <property type="term" value="P:tRNA wobble uridine modification"/>
    <property type="evidence" value="ECO:0007669"/>
    <property type="project" value="InterPro"/>
</dbReference>
<dbReference type="FunFam" id="3.50.50.60:FF:000082">
    <property type="entry name" value="protein MTO1 homolog, mitochondrial isoform X1"/>
    <property type="match status" value="1"/>
</dbReference>
<dbReference type="FunFam" id="1.10.150.570:FF:000001">
    <property type="entry name" value="tRNA uridine 5-carboxymethylaminomethyl modification enzyme MnmG"/>
    <property type="match status" value="1"/>
</dbReference>
<dbReference type="FunFam" id="3.50.50.60:FF:000002">
    <property type="entry name" value="tRNA uridine 5-carboxymethylaminomethyl modification enzyme MnmG"/>
    <property type="match status" value="1"/>
</dbReference>
<dbReference type="Gene3D" id="2.40.30.260">
    <property type="match status" value="1"/>
</dbReference>
<dbReference type="Gene3D" id="3.50.50.60">
    <property type="entry name" value="FAD/NAD(P)-binding domain"/>
    <property type="match status" value="2"/>
</dbReference>
<dbReference type="Gene3D" id="1.10.150.570">
    <property type="entry name" value="GidA associated domain, C-terminal subdomain"/>
    <property type="match status" value="1"/>
</dbReference>
<dbReference type="HAMAP" id="MF_00129">
    <property type="entry name" value="MnmG_GidA"/>
    <property type="match status" value="1"/>
</dbReference>
<dbReference type="InterPro" id="IPR036188">
    <property type="entry name" value="FAD/NAD-bd_sf"/>
</dbReference>
<dbReference type="InterPro" id="IPR049312">
    <property type="entry name" value="GIDA_C_N"/>
</dbReference>
<dbReference type="InterPro" id="IPR004416">
    <property type="entry name" value="MnmG"/>
</dbReference>
<dbReference type="InterPro" id="IPR002218">
    <property type="entry name" value="MnmG-rel"/>
</dbReference>
<dbReference type="InterPro" id="IPR020595">
    <property type="entry name" value="MnmG-rel_CS"/>
</dbReference>
<dbReference type="InterPro" id="IPR026904">
    <property type="entry name" value="MnmG_C"/>
</dbReference>
<dbReference type="InterPro" id="IPR047001">
    <property type="entry name" value="MnmG_C_subdom"/>
</dbReference>
<dbReference type="InterPro" id="IPR044920">
    <property type="entry name" value="MnmG_C_subdom_sf"/>
</dbReference>
<dbReference type="InterPro" id="IPR040131">
    <property type="entry name" value="MnmG_N"/>
</dbReference>
<dbReference type="NCBIfam" id="TIGR00136">
    <property type="entry name" value="mnmG_gidA"/>
    <property type="match status" value="1"/>
</dbReference>
<dbReference type="PANTHER" id="PTHR11806">
    <property type="entry name" value="GLUCOSE INHIBITED DIVISION PROTEIN A"/>
    <property type="match status" value="1"/>
</dbReference>
<dbReference type="PANTHER" id="PTHR11806:SF0">
    <property type="entry name" value="PROTEIN MTO1 HOMOLOG, MITOCHONDRIAL"/>
    <property type="match status" value="1"/>
</dbReference>
<dbReference type="Pfam" id="PF01134">
    <property type="entry name" value="GIDA"/>
    <property type="match status" value="1"/>
</dbReference>
<dbReference type="Pfam" id="PF21680">
    <property type="entry name" value="GIDA_C_1st"/>
    <property type="match status" value="1"/>
</dbReference>
<dbReference type="Pfam" id="PF13932">
    <property type="entry name" value="SAM_GIDA_C"/>
    <property type="match status" value="1"/>
</dbReference>
<dbReference type="SMART" id="SM01228">
    <property type="entry name" value="GIDA_assoc_3"/>
    <property type="match status" value="1"/>
</dbReference>
<dbReference type="SUPFAM" id="SSF51905">
    <property type="entry name" value="FAD/NAD(P)-binding domain"/>
    <property type="match status" value="1"/>
</dbReference>
<dbReference type="PROSITE" id="PS01280">
    <property type="entry name" value="GIDA_1"/>
    <property type="match status" value="1"/>
</dbReference>
<dbReference type="PROSITE" id="PS01281">
    <property type="entry name" value="GIDA_2"/>
    <property type="match status" value="1"/>
</dbReference>
<feature type="chain" id="PRO_1000016682" description="tRNA uridine 5-carboxymethylaminomethyl modification enzyme MnmG">
    <location>
        <begin position="1"/>
        <end position="623"/>
    </location>
</feature>
<feature type="binding site" evidence="1">
    <location>
        <begin position="10"/>
        <end position="15"/>
    </location>
    <ligand>
        <name>FAD</name>
        <dbReference type="ChEBI" id="CHEBI:57692"/>
    </ligand>
</feature>
<feature type="binding site" evidence="1">
    <location>
        <begin position="269"/>
        <end position="283"/>
    </location>
    <ligand>
        <name>NAD(+)</name>
        <dbReference type="ChEBI" id="CHEBI:57540"/>
    </ligand>
</feature>
<sequence>MADYDVIVIGGGHAGCEAAAASARLGARTLLITHKKDTIGVMSCNPAIGGLGKGHLVREIDALDGLMGRVADAAGIQFRLLNRRKGPAVRGPRTQADRKLYREAMQREIASIENLDVAEGDAFDLQTEDGVVCGAVMKDGRSFRAASVVLTTGTFLRGLIHIGDRKMPAGRVGEQPSVGLSETLARFGLQLGRLKTGTPARLDGRTIDWGRVGRQGPDENPVPFSFMTDAIVNRQIDCGVTRTTDATHKIIADNIHRSAMYSGQIEGVGPRYCPSIEDKIVRFGERDGHQIFLEPEGLDDDTVYPNGISTSLPEDVQDAFIRTIPGLEQVTILQPGYAIEYDHVDPRELEPSLGVRRMPGLFLAGQINGTTGYEEAGAQGLVAGLNAALRAAERAPFFFSRTDSYIGVMIDDLTSRGIAEPYRMFTSRAEYRLSLRADNADMRLTPVGIELGCVGNARLTRFQQWKSAYEAGRTLLQSLSVTPNEGKRFGLKLNQDGQRRTAFEILSYPDQSIEGLRPLWPELQAIATDVAAALEIDAAYAVYMERQAADIIGVQREESTAIPEAFDYESLPGLSNELKQKLAQQKPRNLSQAMKVDGVTPAAISLILSWLRREDRRSKRVGG</sequence>
<comment type="function">
    <text evidence="1">NAD-binding protein involved in the addition of a carboxymethylaminomethyl (cmnm) group at the wobble position (U34) of certain tRNAs, forming tRNA-cmnm(5)s(2)U34.</text>
</comment>
<comment type="cofactor">
    <cofactor evidence="1">
        <name>FAD</name>
        <dbReference type="ChEBI" id="CHEBI:57692"/>
    </cofactor>
</comment>
<comment type="subunit">
    <text evidence="1">Homodimer. Heterotetramer of two MnmE and two MnmG subunits.</text>
</comment>
<comment type="subcellular location">
    <subcellularLocation>
        <location evidence="1">Cytoplasm</location>
    </subcellularLocation>
</comment>
<comment type="similarity">
    <text evidence="1">Belongs to the MnmG family.</text>
</comment>
<name>MNMG_SINMW</name>